<name>RS14_CHLPB</name>
<dbReference type="EMBL" id="CP001101">
    <property type="protein sequence ID" value="ACE05187.1"/>
    <property type="molecule type" value="Genomic_DNA"/>
</dbReference>
<dbReference type="SMR" id="B3EP48"/>
<dbReference type="STRING" id="331678.Cphamn1_2283"/>
<dbReference type="KEGG" id="cpb:Cphamn1_2283"/>
<dbReference type="eggNOG" id="COG0199">
    <property type="taxonomic scope" value="Bacteria"/>
</dbReference>
<dbReference type="HOGENOM" id="CLU_139869_0_0_10"/>
<dbReference type="OrthoDB" id="9810484at2"/>
<dbReference type="GO" id="GO:0005737">
    <property type="term" value="C:cytoplasm"/>
    <property type="evidence" value="ECO:0007669"/>
    <property type="project" value="UniProtKB-ARBA"/>
</dbReference>
<dbReference type="GO" id="GO:0015935">
    <property type="term" value="C:small ribosomal subunit"/>
    <property type="evidence" value="ECO:0007669"/>
    <property type="project" value="TreeGrafter"/>
</dbReference>
<dbReference type="GO" id="GO:0019843">
    <property type="term" value="F:rRNA binding"/>
    <property type="evidence" value="ECO:0007669"/>
    <property type="project" value="UniProtKB-UniRule"/>
</dbReference>
<dbReference type="GO" id="GO:0003735">
    <property type="term" value="F:structural constituent of ribosome"/>
    <property type="evidence" value="ECO:0007669"/>
    <property type="project" value="InterPro"/>
</dbReference>
<dbReference type="GO" id="GO:0006412">
    <property type="term" value="P:translation"/>
    <property type="evidence" value="ECO:0007669"/>
    <property type="project" value="UniProtKB-UniRule"/>
</dbReference>
<dbReference type="Gene3D" id="4.10.830.10">
    <property type="entry name" value="30s Ribosomal Protein S14, Chain N"/>
    <property type="match status" value="1"/>
</dbReference>
<dbReference type="HAMAP" id="MF_00537">
    <property type="entry name" value="Ribosomal_uS14_1"/>
    <property type="match status" value="1"/>
</dbReference>
<dbReference type="InterPro" id="IPR001209">
    <property type="entry name" value="Ribosomal_uS14"/>
</dbReference>
<dbReference type="InterPro" id="IPR023036">
    <property type="entry name" value="Ribosomal_uS14_bac/plastid"/>
</dbReference>
<dbReference type="InterPro" id="IPR018271">
    <property type="entry name" value="Ribosomal_uS14_CS"/>
</dbReference>
<dbReference type="InterPro" id="IPR043140">
    <property type="entry name" value="Ribosomal_uS14_sf"/>
</dbReference>
<dbReference type="NCBIfam" id="NF006477">
    <property type="entry name" value="PRK08881.1"/>
    <property type="match status" value="1"/>
</dbReference>
<dbReference type="PANTHER" id="PTHR19836">
    <property type="entry name" value="30S RIBOSOMAL PROTEIN S14"/>
    <property type="match status" value="1"/>
</dbReference>
<dbReference type="PANTHER" id="PTHR19836:SF19">
    <property type="entry name" value="SMALL RIBOSOMAL SUBUNIT PROTEIN US14M"/>
    <property type="match status" value="1"/>
</dbReference>
<dbReference type="Pfam" id="PF00253">
    <property type="entry name" value="Ribosomal_S14"/>
    <property type="match status" value="1"/>
</dbReference>
<dbReference type="SUPFAM" id="SSF57716">
    <property type="entry name" value="Glucocorticoid receptor-like (DNA-binding domain)"/>
    <property type="match status" value="1"/>
</dbReference>
<dbReference type="PROSITE" id="PS00527">
    <property type="entry name" value="RIBOSOMAL_S14"/>
    <property type="match status" value="1"/>
</dbReference>
<feature type="chain" id="PRO_1000128355" description="Small ribosomal subunit protein uS14">
    <location>
        <begin position="1"/>
        <end position="89"/>
    </location>
</feature>
<reference key="1">
    <citation type="submission" date="2008-06" db="EMBL/GenBank/DDBJ databases">
        <title>Complete sequence of Chlorobium phaeobacteroides BS1.</title>
        <authorList>
            <consortium name="US DOE Joint Genome Institute"/>
            <person name="Lucas S."/>
            <person name="Copeland A."/>
            <person name="Lapidus A."/>
            <person name="Glavina del Rio T."/>
            <person name="Dalin E."/>
            <person name="Tice H."/>
            <person name="Bruce D."/>
            <person name="Goodwin L."/>
            <person name="Pitluck S."/>
            <person name="Schmutz J."/>
            <person name="Larimer F."/>
            <person name="Land M."/>
            <person name="Hauser L."/>
            <person name="Kyrpides N."/>
            <person name="Ovchinnikova G."/>
            <person name="Li T."/>
            <person name="Liu Z."/>
            <person name="Zhao F."/>
            <person name="Overmann J."/>
            <person name="Bryant D.A."/>
            <person name="Richardson P."/>
        </authorList>
    </citation>
    <scope>NUCLEOTIDE SEQUENCE [LARGE SCALE GENOMIC DNA]</scope>
    <source>
        <strain>BS1</strain>
    </source>
</reference>
<accession>B3EP48</accession>
<evidence type="ECO:0000255" key="1">
    <source>
        <dbReference type="HAMAP-Rule" id="MF_00537"/>
    </source>
</evidence>
<evidence type="ECO:0000305" key="2"/>
<sequence length="89" mass="10116">MAKKSVIARNEKRKALVEKYAAKRDQLKKAGDYEALSKLPRDSASCRVRTRCVLTGRGRGVYEKFGLCRQMFRKLALEGKLPGIKKASW</sequence>
<organism>
    <name type="scientific">Chlorobium phaeobacteroides (strain BS1)</name>
    <dbReference type="NCBI Taxonomy" id="331678"/>
    <lineage>
        <taxon>Bacteria</taxon>
        <taxon>Pseudomonadati</taxon>
        <taxon>Chlorobiota</taxon>
        <taxon>Chlorobiia</taxon>
        <taxon>Chlorobiales</taxon>
        <taxon>Chlorobiaceae</taxon>
        <taxon>Chlorobium/Pelodictyon group</taxon>
        <taxon>Chlorobium</taxon>
    </lineage>
</organism>
<proteinExistence type="inferred from homology"/>
<gene>
    <name evidence="1" type="primary">rpsN</name>
    <name type="ordered locus">Cphamn1_2283</name>
</gene>
<comment type="function">
    <text evidence="1">Binds 16S rRNA, required for the assembly of 30S particles and may also be responsible for determining the conformation of the 16S rRNA at the A site.</text>
</comment>
<comment type="subunit">
    <text evidence="1">Part of the 30S ribosomal subunit. Contacts proteins S3 and S10.</text>
</comment>
<comment type="similarity">
    <text evidence="1">Belongs to the universal ribosomal protein uS14 family.</text>
</comment>
<protein>
    <recommendedName>
        <fullName evidence="1">Small ribosomal subunit protein uS14</fullName>
    </recommendedName>
    <alternativeName>
        <fullName evidence="2">30S ribosomal protein S14</fullName>
    </alternativeName>
</protein>
<keyword id="KW-0687">Ribonucleoprotein</keyword>
<keyword id="KW-0689">Ribosomal protein</keyword>
<keyword id="KW-0694">RNA-binding</keyword>
<keyword id="KW-0699">rRNA-binding</keyword>